<reference key="1">
    <citation type="journal article" date="2005" name="J. Bacteriol.">
        <title>The genome of Sulfolobus acidocaldarius, a model organism of the Crenarchaeota.</title>
        <authorList>
            <person name="Chen L."/>
            <person name="Bruegger K."/>
            <person name="Skovgaard M."/>
            <person name="Redder P."/>
            <person name="She Q."/>
            <person name="Torarinsson E."/>
            <person name="Greve B."/>
            <person name="Awayez M."/>
            <person name="Zibat A."/>
            <person name="Klenk H.-P."/>
            <person name="Garrett R.A."/>
        </authorList>
    </citation>
    <scope>NUCLEOTIDE SEQUENCE [LARGE SCALE GENOMIC DNA]</scope>
    <source>
        <strain>ATCC 33909 / DSM 639 / JCM 8929 / NBRC 15157 / NCIMB 11770</strain>
    </source>
</reference>
<organism>
    <name type="scientific">Sulfolobus acidocaldarius (strain ATCC 33909 / DSM 639 / JCM 8929 / NBRC 15157 / NCIMB 11770)</name>
    <dbReference type="NCBI Taxonomy" id="330779"/>
    <lineage>
        <taxon>Archaea</taxon>
        <taxon>Thermoproteota</taxon>
        <taxon>Thermoprotei</taxon>
        <taxon>Sulfolobales</taxon>
        <taxon>Sulfolobaceae</taxon>
        <taxon>Sulfolobus</taxon>
    </lineage>
</organism>
<keyword id="KW-0169">Cobalamin biosynthesis</keyword>
<keyword id="KW-0170">Cobalt</keyword>
<keyword id="KW-0456">Lyase</keyword>
<keyword id="KW-0479">Metal-binding</keyword>
<keyword id="KW-1185">Reference proteome</keyword>
<accession>Q4JAI2</accession>
<evidence type="ECO:0000255" key="1">
    <source>
        <dbReference type="HAMAP-Rule" id="MF_00785"/>
    </source>
</evidence>
<protein>
    <recommendedName>
        <fullName evidence="1">Sirohydrochlorin cobaltochelatase</fullName>
        <ecNumber evidence="1">4.99.1.3</ecNumber>
    </recommendedName>
    <alternativeName>
        <fullName evidence="1">CbiXS</fullName>
    </alternativeName>
</protein>
<comment type="function">
    <text evidence="1">Catalyzes the insertion of Co(2+) into sirohydrochlorin as part of the anaerobic pathway to cobalamin biosynthesis.</text>
</comment>
<comment type="catalytic activity">
    <reaction evidence="1">
        <text>Co-sirohydrochlorin + 2 H(+) = sirohydrochlorin + Co(2+)</text>
        <dbReference type="Rhea" id="RHEA:15893"/>
        <dbReference type="ChEBI" id="CHEBI:15378"/>
        <dbReference type="ChEBI" id="CHEBI:48828"/>
        <dbReference type="ChEBI" id="CHEBI:58351"/>
        <dbReference type="ChEBI" id="CHEBI:60049"/>
        <dbReference type="EC" id="4.99.1.3"/>
    </reaction>
</comment>
<comment type="pathway">
    <text evidence="1">Cofactor biosynthesis; adenosylcobalamin biosynthesis; cob(II)yrinate a,c-diamide from sirohydrochlorin (anaerobic route): step 1/10.</text>
</comment>
<comment type="subunit">
    <text evidence="1">Homotetramer; dimer of dimers.</text>
</comment>
<comment type="similarity">
    <text evidence="1">Belongs to the CbiX family. CbiXS subfamily.</text>
</comment>
<gene>
    <name evidence="1" type="primary">cbiX</name>
    <name type="ordered locus">Saci_0830</name>
</gene>
<proteinExistence type="inferred from homology"/>
<name>CBIX_SULAC</name>
<dbReference type="EC" id="4.99.1.3" evidence="1"/>
<dbReference type="EMBL" id="CP000077">
    <property type="protein sequence ID" value="AAY80197.1"/>
    <property type="molecule type" value="Genomic_DNA"/>
</dbReference>
<dbReference type="RefSeq" id="WP_011277699.1">
    <property type="nucleotide sequence ID" value="NC_007181.1"/>
</dbReference>
<dbReference type="SMR" id="Q4JAI2"/>
<dbReference type="STRING" id="330779.Saci_0830"/>
<dbReference type="GeneID" id="14551343"/>
<dbReference type="KEGG" id="sai:Saci_0830"/>
<dbReference type="PATRIC" id="fig|330779.12.peg.794"/>
<dbReference type="eggNOG" id="arCOG02246">
    <property type="taxonomic scope" value="Archaea"/>
</dbReference>
<dbReference type="HOGENOM" id="CLU_065901_2_1_2"/>
<dbReference type="UniPathway" id="UPA00148">
    <property type="reaction ID" value="UER00223"/>
</dbReference>
<dbReference type="Proteomes" id="UP000001018">
    <property type="component" value="Chromosome"/>
</dbReference>
<dbReference type="GO" id="GO:0050897">
    <property type="term" value="F:cobalt ion binding"/>
    <property type="evidence" value="ECO:0007669"/>
    <property type="project" value="UniProtKB-UniRule"/>
</dbReference>
<dbReference type="GO" id="GO:0016852">
    <property type="term" value="F:sirohydrochlorin cobaltochelatase activity"/>
    <property type="evidence" value="ECO:0007669"/>
    <property type="project" value="UniProtKB-UniRule"/>
</dbReference>
<dbReference type="GO" id="GO:0019251">
    <property type="term" value="P:anaerobic cobalamin biosynthetic process"/>
    <property type="evidence" value="ECO:0007669"/>
    <property type="project" value="UniProtKB-UniRule"/>
</dbReference>
<dbReference type="CDD" id="cd03416">
    <property type="entry name" value="CbiX_SirB_N"/>
    <property type="match status" value="1"/>
</dbReference>
<dbReference type="Gene3D" id="3.40.50.1400">
    <property type="match status" value="1"/>
</dbReference>
<dbReference type="HAMAP" id="MF_00785">
    <property type="entry name" value="CbiX"/>
    <property type="match status" value="1"/>
</dbReference>
<dbReference type="InterPro" id="IPR002762">
    <property type="entry name" value="CbiX-like"/>
</dbReference>
<dbReference type="InterPro" id="IPR023652">
    <property type="entry name" value="SiroHydchlorin_Cochelatase"/>
</dbReference>
<dbReference type="InterPro" id="IPR050963">
    <property type="entry name" value="Sirohydro_Cobaltochel/CbiX"/>
</dbReference>
<dbReference type="PANTHER" id="PTHR33542">
    <property type="entry name" value="SIROHYDROCHLORIN FERROCHELATASE, CHLOROPLASTIC"/>
    <property type="match status" value="1"/>
</dbReference>
<dbReference type="PANTHER" id="PTHR33542:SF3">
    <property type="entry name" value="SIROHYDROCHLORIN FERROCHELATASE, CHLOROPLASTIC"/>
    <property type="match status" value="1"/>
</dbReference>
<dbReference type="Pfam" id="PF01903">
    <property type="entry name" value="CbiX"/>
    <property type="match status" value="1"/>
</dbReference>
<dbReference type="SUPFAM" id="SSF53800">
    <property type="entry name" value="Chelatase"/>
    <property type="match status" value="1"/>
</dbReference>
<sequence length="123" mass="13941">MIGLLLVLHGSKIKEWQEIVINYAEELKRHFPLVEYGFIEINEPKIDEAAKKLVERGADTIVVVPLLFAAGMHFKRDIPNQLKETSNKAKIIIAEPIGFDKRIVDILKEKAEKALSVEGTSYQ</sequence>
<feature type="chain" id="PRO_0000150361" description="Sirohydrochlorin cobaltochelatase">
    <location>
        <begin position="1"/>
        <end position="123"/>
    </location>
</feature>
<feature type="active site" description="Proton acceptor" evidence="1">
    <location>
        <position position="9"/>
    </location>
</feature>
<feature type="binding site" evidence="1">
    <location>
        <position position="9"/>
    </location>
    <ligand>
        <name>Co(2+)</name>
        <dbReference type="ChEBI" id="CHEBI:48828"/>
    </ligand>
</feature>
<feature type="binding site" evidence="1">
    <location>
        <position position="43"/>
    </location>
    <ligand>
        <name>substrate</name>
    </ligand>
</feature>
<feature type="binding site" evidence="1">
    <location>
        <begin position="68"/>
        <end position="73"/>
    </location>
    <ligand>
        <name>substrate</name>
    </ligand>
</feature>
<feature type="binding site" evidence="1">
    <location>
        <position position="73"/>
    </location>
    <ligand>
        <name>Co(2+)</name>
        <dbReference type="ChEBI" id="CHEBI:48828"/>
    </ligand>
</feature>